<proteinExistence type="evidence at transcript level"/>
<comment type="function">
    <text evidence="2 3">Dynamin-related GTPase that is essential for normal mitochondrial morphology by mediating fusion of the mitochondrial inner membranes, regulating cristae morphology and maintaining respiratory chain function (By similarity). Exists in two forms: the transmembrane, long form (Dynamin-like GTPase OPA1, long form; L-OPA1), which is tethered to the inner mitochondrial membrane, and the short soluble form (Dynamin-like GTPase OPA1, short form; S-OPA1), which results from proteolytic cleavage and localizes in the intermembrane space (By similarity). Both forms (L-OPA1 and S-OPA1) cooperate to catalyze the fusion of the mitochondrial inner membrane (By similarity). The equilibrium between L-OPA1 and S-OPA1 is essential: excess levels of S-OPA1, produced by cleavage by OMA1 following loss of mitochondrial membrane potential, lead to an impaired equilibrium between L-OPA1 and S-OPA1, inhibiting mitochondrial fusion (By similarity). The balance between L-OPA1 and S-OPA1 also influences cristae shape and morphology (By similarity). Involved in remodeling cristae and the release of cytochrome c during apoptosis (By similarity). Proteolytic processing by PARL in response to intrinsic apoptotic signals may lead to disassembly of OPA1 oligomers and release of the caspase activator cytochrome C (CYCS) into the mitochondrial intermembrane space (By similarity). Acts as a regulator of T-helper Th17 cells, which are characterized by cells with fused mitochondria with tight cristae, by mediating mitochondrial membrane remodeling: OPA1 is required for interleukin-17 (IL-17) production (By similarity). Its role in mitochondrial morphology is required for mitochondrial genome maintenance (By similarity).</text>
</comment>
<comment type="function">
    <molecule>Dynamin-like GTPase OPA1, long form</molecule>
    <text evidence="1 2 3">Constitutes the transmembrane long form (L-OPA1) that plays a central role in mitochondrial inner membrane fusion and cristae morphology (By similarity). L-OPA1 and the soluble short form (S-OPA1) form higher-order helical assemblies that coordinate the fusion of mitochondrial inner membranes (By similarity). Inner membrane-anchored L-OPA1 molecules initiate membrane remodeling by recruiting soluble S-OPA1 to rapidly polymerize into a flexible cylindrical scaffold encaging the mitochondrial inner membrane (By similarity). Once at the membrane surface, the formation of S-OPA1 helices induce bilayer curvature (By similarity). OPA1 dimerization through the paddle region, which inserts into cardiolipin-containing membrane, promotes GTP hydrolysis and the helical assembly of a flexible OPA1 lattice on the membrane, which drives membrane curvature and mitochondrial fusion (By similarity). Plays a role in the maintenance and remodeling of mitochondrial cristae, some invaginations of the mitochondrial inner membrane that provide an increase in the surface area (By similarity). Probably acts by forming helical filaments at the inside of inner membrane tubes with the shape and dimensions of crista junctions (By similarity). The equilibrium between L-OPA1 and S-OPA1 influences cristae shape and morphology: increased L-OPA1 levels promote cristae stacking and elongated mitochondria, while increased S-OPA1 levels correlated with irregular cristae packing and round mitochondria shape (By similarity).</text>
</comment>
<comment type="function">
    <molecule>Dynamin-like GTPase OPA1, short form</molecule>
    <text evidence="1 2 3">Constitutes the soluble short form (S-OPA1) generated by cleavage by OMA1, which plays a central role in mitochondrial inner membrane fusion and cristae morphology (By similarity). The transmembrane long form (L-OPA1) and the S-OPA1 form higher-order helical assemblies that coordinate the fusion of mitochondrial inner membranes (By similarity). Inner membrane-anchored L-OPA1 molecules initiate membrane remodeling by recruiting soluble S-OPA1 to rapidly polymerize into a flexible cylindrical scaffold encaging the mitochondrial inner membrane (By similarity). Once at the membrane surface, the formation of S-OPA1 helices induce bilayer curvature (By similarity). OPA1 dimerization through the paddle region, which inserts into cardiolipin-containing membrane, promotes GTP hydrolysis and the helical assembly of a flexible OPA1 lattice on the membrane, which drives membrane curvature and mitochondrial fusion (By similarity). Excess levels of S-OPA1 produced by cleavage by OMA1 following stress conditions that induce loss of mitochondrial membrane potential, lead to an impaired equilibrium between L-OPA1 and S-OPA1, thereby inhibiting mitochondrial fusion (By similarity). Involved in mitochondrial safeguard in response to transient mitochondrial membrane depolarization by mediating flickering: cleavage by OMA1 leads to excess production of S-OPA1, preventing mitochondrial hyperfusion (By similarity). Plays a role in the maintenance and remodeling of mitochondrial cristae, some invaginations of the mitochondrial inner membrane that provide an increase in the surface area (By similarity). Probably acts by forming helical filaments at the inside of inner membrane tubes with the shape and dimensions of crista junctions (By similarity). The equilibrium between L-OPA1 and S-OPA1 influences cristae shape and morphology: increased L-OPA1 levels promote cristae stacking and elongated mitochondria, while increased S-OPA1 levels correlated with irregular cristae packing and round mitochondria shape (By similarity).</text>
</comment>
<comment type="catalytic activity">
    <reaction evidence="2">
        <text>GTP + H2O = GDP + phosphate + H(+)</text>
        <dbReference type="Rhea" id="RHEA:19669"/>
        <dbReference type="ChEBI" id="CHEBI:15377"/>
        <dbReference type="ChEBI" id="CHEBI:15378"/>
        <dbReference type="ChEBI" id="CHEBI:37565"/>
        <dbReference type="ChEBI" id="CHEBI:43474"/>
        <dbReference type="ChEBI" id="CHEBI:58189"/>
        <dbReference type="EC" id="3.6.5.5"/>
    </reaction>
</comment>
<comment type="activity regulation">
    <text evidence="2">Activated by guanine nucleotide exchange factor RCC1L.</text>
</comment>
<comment type="subunit">
    <text evidence="2">Oligomeric complex consisting of membrane-bound and soluble forms of OPA1 (By similarity). Interacts with RCC1L; RCC1L acts as a guanine nucleotide exchange factor (GEF) for OPA1 by exchanging bound GDP for free GTP (By similarity). Interacts with CHCHD3 and IMMT; these interactions occur preferentially with soluble OPA1 forms (By similarity). Interacts with PRELID1 (By similarity).</text>
</comment>
<comment type="subcellular location">
    <molecule>Dynamin-like GTPase OPA1, long form</molecule>
    <subcellularLocation>
        <location evidence="2">Mitochondrion inner membrane</location>
        <topology evidence="5">Single-pass membrane protein</topology>
    </subcellularLocation>
    <text evidence="2">Detected at contact sites between endoplasmic reticulum and mitochondrion membranes.</text>
</comment>
<comment type="subcellular location">
    <molecule>Dynamin-like GTPase OPA1, short form</molecule>
    <subcellularLocation>
        <location evidence="2">Mitochondrion intermembrane space</location>
    </subcellularLocation>
</comment>
<comment type="domain">
    <text evidence="2">The paddle region plays a major role in driving mitochondrial inner membrane fusion (By similarity). It binds lipid membranes enriched in negatively charged phospholipids, such as cardiolipin, and promotes membrane tubulation (By similarity). A conserved intramembrane region, named membrane insertion loop (MIL), within the paddle region inserts deeply into the bilayer, further stabilizing the interactions with cardiolipin-enriched membranes (By similarity). OPA1 dimerization through the paddle domain promotes the helical assembly of a flexible OPA1 lattice on the membrane, driving mitochondrial fusion in cells (By similarity).</text>
</comment>
<comment type="PTM">
    <text evidence="2 3">Cleaved by OMA1 or YME1L downstream of the transmembrane region in response to different signals to generate soluble forms (By similarity). Cleaved by OMA1 at position S1 following stress conditions, generating the short soluble form (Dynamin-like GTPase OPA1, short form; S-OPA1) (By similarity). AFG3L2 is involved in the regulation of OMA1-dependent processing of OPA1 (By similarity). PARL-dependent proteolytic processing releases an antiapoptotic soluble form not required for mitochondrial fusion (By similarity).</text>
</comment>
<comment type="similarity">
    <text evidence="6">Belongs to the TRAFAC class dynamin-like GTPase superfamily. Dynamin/Fzo/YdjA family.</text>
</comment>
<organism>
    <name type="scientific">Pongo abelii</name>
    <name type="common">Sumatran orangutan</name>
    <name type="synonym">Pongo pygmaeus abelii</name>
    <dbReference type="NCBI Taxonomy" id="9601"/>
    <lineage>
        <taxon>Eukaryota</taxon>
        <taxon>Metazoa</taxon>
        <taxon>Chordata</taxon>
        <taxon>Craniata</taxon>
        <taxon>Vertebrata</taxon>
        <taxon>Euteleostomi</taxon>
        <taxon>Mammalia</taxon>
        <taxon>Eutheria</taxon>
        <taxon>Euarchontoglires</taxon>
        <taxon>Primates</taxon>
        <taxon>Haplorrhini</taxon>
        <taxon>Catarrhini</taxon>
        <taxon>Hominidae</taxon>
        <taxon>Pongo</taxon>
    </lineage>
</organism>
<protein>
    <recommendedName>
        <fullName evidence="7">Dynamin-like GTPase OPA1, mitochondrial</fullName>
        <ecNumber evidence="2">3.6.5.5</ecNumber>
    </recommendedName>
    <alternativeName>
        <fullName>Optic atrophy protein 1 homolog</fullName>
    </alternativeName>
    <component>
        <recommendedName>
            <fullName evidence="7">Dynamin-like GTPase OPA1, long form</fullName>
            <shortName evidence="2">L-OPA1</shortName>
        </recommendedName>
    </component>
    <component>
        <recommendedName>
            <fullName evidence="7">Dynamin-like GTPase OPA1, short form</fullName>
            <shortName evidence="2">S-OPA1</shortName>
        </recommendedName>
    </component>
</protein>
<accession>Q5RAM3</accession>
<reference evidence="8" key="1">
    <citation type="submission" date="2004-11" db="EMBL/GenBank/DDBJ databases">
        <authorList>
            <consortium name="The German cDNA consortium"/>
        </authorList>
    </citation>
    <scope>NUCLEOTIDE SEQUENCE [LARGE SCALE MRNA]</scope>
    <source>
        <tissue evidence="8">Brain cortex</tissue>
    </source>
</reference>
<evidence type="ECO:0000250" key="1">
    <source>
        <dbReference type="UniProtKB" id="G0SGC7"/>
    </source>
</evidence>
<evidence type="ECO:0000250" key="2">
    <source>
        <dbReference type="UniProtKB" id="O60313"/>
    </source>
</evidence>
<evidence type="ECO:0000250" key="3">
    <source>
        <dbReference type="UniProtKB" id="P58281"/>
    </source>
</evidence>
<evidence type="ECO:0000250" key="4">
    <source>
        <dbReference type="UniProtKB" id="Q2TA68"/>
    </source>
</evidence>
<evidence type="ECO:0000255" key="5"/>
<evidence type="ECO:0000255" key="6">
    <source>
        <dbReference type="PROSITE-ProRule" id="PRU01055"/>
    </source>
</evidence>
<evidence type="ECO:0000305" key="7"/>
<evidence type="ECO:0000312" key="8">
    <source>
        <dbReference type="EMBL" id="CAH91187.1"/>
    </source>
</evidence>
<feature type="transit peptide" description="Mitochondrion" evidence="4">
    <location>
        <begin position="1"/>
        <end position="87"/>
    </location>
</feature>
<feature type="chain" id="PRO_0000257992" description="Dynamin-like GTPase OPA1, long form">
    <location>
        <begin position="88"/>
        <end position="960"/>
    </location>
</feature>
<feature type="chain" id="PRO_0000257993" description="Dynamin-like GTPase OPA1, short form" evidence="4">
    <location>
        <begin position="195"/>
        <end position="960"/>
    </location>
</feature>
<feature type="topological domain" description="Mitochondrial matrix" evidence="2">
    <location>
        <begin position="88"/>
        <end position="96"/>
    </location>
</feature>
<feature type="transmembrane region" description="Helical" evidence="5">
    <location>
        <begin position="97"/>
        <end position="113"/>
    </location>
</feature>
<feature type="topological domain" description="Mitochondrial intermembrane" evidence="2">
    <location>
        <begin position="114"/>
        <end position="770"/>
    </location>
</feature>
<feature type="intramembrane region" evidence="2">
    <location>
        <begin position="771"/>
        <end position="781"/>
    </location>
</feature>
<feature type="topological domain" description="Mitochondrial intermembrane" evidence="7">
    <location>
        <begin position="782"/>
        <end position="960"/>
    </location>
</feature>
<feature type="domain" description="Dynamin-type G" evidence="6">
    <location>
        <begin position="285"/>
        <end position="561"/>
    </location>
</feature>
<feature type="region of interest" description="G1 motif" evidence="6">
    <location>
        <begin position="295"/>
        <end position="302"/>
    </location>
</feature>
<feature type="region of interest" description="G2 motif" evidence="6">
    <location>
        <begin position="321"/>
        <end position="324"/>
    </location>
</feature>
<feature type="region of interest" description="G3 motif" evidence="6">
    <location>
        <begin position="398"/>
        <end position="401"/>
    </location>
</feature>
<feature type="region of interest" description="G4 motif" evidence="6">
    <location>
        <begin position="467"/>
        <end position="470"/>
    </location>
</feature>
<feature type="region of interest" description="G5 motif" evidence="6">
    <location>
        <begin position="501"/>
        <end position="504"/>
    </location>
</feature>
<feature type="region of interest" description="Stalk region" evidence="2">
    <location>
        <begin position="589"/>
        <end position="836"/>
    </location>
</feature>
<feature type="region of interest" description="Paddle region" evidence="2">
    <location>
        <begin position="736"/>
        <end position="856"/>
    </location>
</feature>
<feature type="region of interest" description="Stalk region" evidence="2">
    <location>
        <begin position="874"/>
        <end position="928"/>
    </location>
</feature>
<feature type="coiled-coil region" evidence="5">
    <location>
        <begin position="210"/>
        <end position="254"/>
    </location>
</feature>
<feature type="coiled-coil region" evidence="5">
    <location>
        <begin position="895"/>
        <end position="960"/>
    </location>
</feature>
<feature type="binding site" evidence="2">
    <location>
        <position position="298"/>
    </location>
    <ligand>
        <name>GTP</name>
        <dbReference type="ChEBI" id="CHEBI:37565"/>
    </ligand>
</feature>
<feature type="binding site" evidence="2">
    <location>
        <position position="300"/>
    </location>
    <ligand>
        <name>GTP</name>
        <dbReference type="ChEBI" id="CHEBI:37565"/>
    </ligand>
</feature>
<feature type="binding site" evidence="2">
    <location>
        <position position="301"/>
    </location>
    <ligand>
        <name>GTP</name>
        <dbReference type="ChEBI" id="CHEBI:37565"/>
    </ligand>
</feature>
<feature type="binding site" evidence="2">
    <location>
        <position position="302"/>
    </location>
    <ligand>
        <name>GTP</name>
        <dbReference type="ChEBI" id="CHEBI:37565"/>
    </ligand>
</feature>
<feature type="binding site" evidence="2">
    <location>
        <position position="302"/>
    </location>
    <ligand>
        <name>Mg(2+)</name>
        <dbReference type="ChEBI" id="CHEBI:18420"/>
    </ligand>
</feature>
<feature type="binding site" evidence="2">
    <location>
        <position position="303"/>
    </location>
    <ligand>
        <name>GTP</name>
        <dbReference type="ChEBI" id="CHEBI:37565"/>
    </ligand>
</feature>
<feature type="binding site" evidence="2">
    <location>
        <position position="317"/>
    </location>
    <ligand>
        <name>GTP</name>
        <dbReference type="ChEBI" id="CHEBI:37565"/>
    </ligand>
</feature>
<feature type="binding site" evidence="2">
    <location>
        <position position="323"/>
    </location>
    <ligand>
        <name>Mg(2+)</name>
        <dbReference type="ChEBI" id="CHEBI:18420"/>
    </ligand>
</feature>
<feature type="binding site" evidence="2">
    <location>
        <position position="398"/>
    </location>
    <ligand>
        <name>Mg(2+)</name>
        <dbReference type="ChEBI" id="CHEBI:18420"/>
    </ligand>
</feature>
<feature type="binding site" evidence="2">
    <location>
        <position position="468"/>
    </location>
    <ligand>
        <name>GTP</name>
        <dbReference type="ChEBI" id="CHEBI:37565"/>
    </ligand>
</feature>
<feature type="binding site" evidence="2">
    <location>
        <position position="470"/>
    </location>
    <ligand>
        <name>GTP</name>
        <dbReference type="ChEBI" id="CHEBI:37565"/>
    </ligand>
</feature>
<feature type="binding site" evidence="2">
    <location>
        <position position="503"/>
    </location>
    <ligand>
        <name>GTP</name>
        <dbReference type="ChEBI" id="CHEBI:37565"/>
    </ligand>
</feature>
<feature type="site" description="Cleavage at site S1" evidence="4">
    <location>
        <begin position="194"/>
        <end position="195"/>
    </location>
</feature>
<feature type="modified residue" description="N6-acetyllysine" evidence="2">
    <location>
        <position position="228"/>
    </location>
</feature>
<feature type="disulfide bond" evidence="2">
    <location>
        <begin position="856"/>
        <end position="874"/>
    </location>
</feature>
<sequence>MWRLRRAAVACEVCQSLVKHSSGIKGSLPLQKLHLVSRSIYHSHYPTLKLQRPQLRTSFQQFSSLTNLPLRKLKFSPIKYGYQPRRNFWPARLATRLLKLRYLILGSAVGGGYTAKKTFDQWKDMIPDLSEYKWIVPDIVWEIDEYIDFEKIRKALPNSEDLVKLAPDFDKIVESLSLLKDFFTSGSPGETAFRATDHGSESDKHFRKVSDKEKIDQLQEELLHTQLKYQRILERLEKENKELRKLVLQKDDKGIHHRKLKKSLIDMYSEVLDVLSDYDASYNTQDHLPRVVVVGDQSAGKTSVLEMIAQARIFPRGSGEMMTRSPVKVTLSEGPHHVALFKDSSREFDLTKEEDLAALRHEIELRMRKNVKEGCTVSPETISLNVKGPGLQRMVLVDLPGVINTVTSGMAPDTKETIFSISKAYMQNPNAIILCIQDGSVDAERSIVTDLVSQMDPHGRRTIFVLTKVDLAEKNVASPSRIQQIIEGKLFPMKALGYFAVVTGKGNSSESIEAIREYEEEFFQNSKLLKTSMLKAHQVTTRNLSLAVSDCFWKMVRESVEQQADSFKATRFNLETEWKNNYPRLRELDRNELFEKAKNEILDEVISLSQATPKHWEEILQQSLWERVSTHVIENIYLPAAQTMNSGTFNTTVDIKLKQWTDKQLPNKAVEVAWETLQGEFSRFMTEPKGKEHDDIFDKLKEAVKEESIKRHKWNDFAEDSLRVIQHNALEDRSISDKQQWDAAIYFMEEALQARLKDTENAIENMVGPDWKKRWLYWKNRTQEQCVHNETKNELEKMLKCNEEHPAYLASDEITTVRKNLESRGVEVDPSLIKDTWHQVYRRHFLKTALNHCNLCRRGFYYYQRHFVDSELECNDVVLFWRIQRMLAITANTLRQQLTNTEVRRLEKNVKEVLEDFAEDGEKKIKLLTGKRVQLAEDLKKVREIQEKLDAFIEALHQEK</sequence>
<name>OPA1_PONAB</name>
<keyword id="KW-0007">Acetylation</keyword>
<keyword id="KW-0053">Apoptosis</keyword>
<keyword id="KW-0175">Coiled coil</keyword>
<keyword id="KW-1015">Disulfide bond</keyword>
<keyword id="KW-0342">GTP-binding</keyword>
<keyword id="KW-0378">Hydrolase</keyword>
<keyword id="KW-0446">Lipid-binding</keyword>
<keyword id="KW-0460">Magnesium</keyword>
<keyword id="KW-0472">Membrane</keyword>
<keyword id="KW-0479">Metal-binding</keyword>
<keyword id="KW-0496">Mitochondrion</keyword>
<keyword id="KW-0999">Mitochondrion inner membrane</keyword>
<keyword id="KW-0547">Nucleotide-binding</keyword>
<keyword id="KW-1185">Reference proteome</keyword>
<keyword id="KW-0809">Transit peptide</keyword>
<keyword id="KW-0812">Transmembrane</keyword>
<keyword id="KW-1133">Transmembrane helix</keyword>
<dbReference type="EC" id="3.6.5.5" evidence="2"/>
<dbReference type="EMBL" id="CR858992">
    <property type="protein sequence ID" value="CAH91187.1"/>
    <property type="molecule type" value="mRNA"/>
</dbReference>
<dbReference type="RefSeq" id="NP_001125695.1">
    <property type="nucleotide sequence ID" value="NM_001132223.1"/>
</dbReference>
<dbReference type="SMR" id="Q5RAM3"/>
<dbReference type="FunCoup" id="Q5RAM3">
    <property type="interactions" value="3208"/>
</dbReference>
<dbReference type="STRING" id="9601.ENSPPYP00000016126"/>
<dbReference type="GeneID" id="100172619"/>
<dbReference type="KEGG" id="pon:100172619"/>
<dbReference type="CTD" id="4976"/>
<dbReference type="eggNOG" id="KOG0447">
    <property type="taxonomic scope" value="Eukaryota"/>
</dbReference>
<dbReference type="InParanoid" id="Q5RAM3"/>
<dbReference type="OrthoDB" id="415706at2759"/>
<dbReference type="Proteomes" id="UP000001595">
    <property type="component" value="Unplaced"/>
</dbReference>
<dbReference type="GO" id="GO:0005874">
    <property type="term" value="C:microtubule"/>
    <property type="evidence" value="ECO:0007669"/>
    <property type="project" value="TreeGrafter"/>
</dbReference>
<dbReference type="GO" id="GO:0005743">
    <property type="term" value="C:mitochondrial inner membrane"/>
    <property type="evidence" value="ECO:0007669"/>
    <property type="project" value="UniProtKB-SubCell"/>
</dbReference>
<dbReference type="GO" id="GO:0005758">
    <property type="term" value="C:mitochondrial intermembrane space"/>
    <property type="evidence" value="ECO:0007669"/>
    <property type="project" value="UniProtKB-SubCell"/>
</dbReference>
<dbReference type="GO" id="GO:1901612">
    <property type="term" value="F:cardiolipin binding"/>
    <property type="evidence" value="ECO:0000250"/>
    <property type="project" value="UniProtKB"/>
</dbReference>
<dbReference type="GO" id="GO:0005525">
    <property type="term" value="F:GTP binding"/>
    <property type="evidence" value="ECO:0007669"/>
    <property type="project" value="UniProtKB-KW"/>
</dbReference>
<dbReference type="GO" id="GO:0003924">
    <property type="term" value="F:GTPase activity"/>
    <property type="evidence" value="ECO:0000250"/>
    <property type="project" value="UniProtKB"/>
</dbReference>
<dbReference type="GO" id="GO:0140523">
    <property type="term" value="F:GTPase-dependent fusogenic activity"/>
    <property type="evidence" value="ECO:0000250"/>
    <property type="project" value="UniProtKB"/>
</dbReference>
<dbReference type="GO" id="GO:0180020">
    <property type="term" value="F:membrane bending activity"/>
    <property type="evidence" value="ECO:0000250"/>
    <property type="project" value="UniProtKB"/>
</dbReference>
<dbReference type="GO" id="GO:0046872">
    <property type="term" value="F:metal ion binding"/>
    <property type="evidence" value="ECO:0007669"/>
    <property type="project" value="UniProtKB-KW"/>
</dbReference>
<dbReference type="GO" id="GO:0008017">
    <property type="term" value="F:microtubule binding"/>
    <property type="evidence" value="ECO:0007669"/>
    <property type="project" value="TreeGrafter"/>
</dbReference>
<dbReference type="GO" id="GO:0070300">
    <property type="term" value="F:phosphatidic acid binding"/>
    <property type="evidence" value="ECO:0000250"/>
    <property type="project" value="UniProtKB"/>
</dbReference>
<dbReference type="GO" id="GO:0006915">
    <property type="term" value="P:apoptotic process"/>
    <property type="evidence" value="ECO:0007669"/>
    <property type="project" value="UniProtKB-KW"/>
</dbReference>
<dbReference type="GO" id="GO:0006897">
    <property type="term" value="P:endocytosis"/>
    <property type="evidence" value="ECO:0007669"/>
    <property type="project" value="TreeGrafter"/>
</dbReference>
<dbReference type="GO" id="GO:0046039">
    <property type="term" value="P:GTP metabolic process"/>
    <property type="evidence" value="ECO:0000250"/>
    <property type="project" value="UniProtKB"/>
</dbReference>
<dbReference type="GO" id="GO:0048312">
    <property type="term" value="P:intracellular distribution of mitochondria"/>
    <property type="evidence" value="ECO:0007669"/>
    <property type="project" value="TreeGrafter"/>
</dbReference>
<dbReference type="GO" id="GO:0097749">
    <property type="term" value="P:membrane tubulation"/>
    <property type="evidence" value="ECO:0000250"/>
    <property type="project" value="UniProtKB"/>
</dbReference>
<dbReference type="GO" id="GO:0000266">
    <property type="term" value="P:mitochondrial fission"/>
    <property type="evidence" value="ECO:0007669"/>
    <property type="project" value="TreeGrafter"/>
</dbReference>
<dbReference type="GO" id="GO:0008053">
    <property type="term" value="P:mitochondrial fusion"/>
    <property type="evidence" value="ECO:0000250"/>
    <property type="project" value="UniProtKB"/>
</dbReference>
<dbReference type="GO" id="GO:0000002">
    <property type="term" value="P:mitochondrial genome maintenance"/>
    <property type="evidence" value="ECO:0000250"/>
    <property type="project" value="UniProtKB"/>
</dbReference>
<dbReference type="GO" id="GO:1990627">
    <property type="term" value="P:mitochondrial inner membrane fusion"/>
    <property type="evidence" value="ECO:0000250"/>
    <property type="project" value="UniProtKB"/>
</dbReference>
<dbReference type="GO" id="GO:0016559">
    <property type="term" value="P:peroxisome fission"/>
    <property type="evidence" value="ECO:0007669"/>
    <property type="project" value="TreeGrafter"/>
</dbReference>
<dbReference type="GO" id="GO:0032740">
    <property type="term" value="P:positive regulation of interleukin-17 production"/>
    <property type="evidence" value="ECO:0000250"/>
    <property type="project" value="UniProtKB"/>
</dbReference>
<dbReference type="GO" id="GO:2000330">
    <property type="term" value="P:positive regulation of T-helper 17 cell lineage commitment"/>
    <property type="evidence" value="ECO:0000250"/>
    <property type="project" value="UniProtKB"/>
</dbReference>
<dbReference type="CDD" id="cd08771">
    <property type="entry name" value="DLP_1"/>
    <property type="match status" value="1"/>
</dbReference>
<dbReference type="FunFam" id="3.40.50.300:FF:000171">
    <property type="entry name" value="Dynamin-like 120 kDa protein, mitochondrial"/>
    <property type="match status" value="1"/>
</dbReference>
<dbReference type="Gene3D" id="3.40.50.300">
    <property type="entry name" value="P-loop containing nucleotide triphosphate hydrolases"/>
    <property type="match status" value="1"/>
</dbReference>
<dbReference type="InterPro" id="IPR022812">
    <property type="entry name" value="Dynamin"/>
</dbReference>
<dbReference type="InterPro" id="IPR001401">
    <property type="entry name" value="Dynamin_GTPase"/>
</dbReference>
<dbReference type="InterPro" id="IPR045063">
    <property type="entry name" value="Dynamin_N"/>
</dbReference>
<dbReference type="InterPro" id="IPR030381">
    <property type="entry name" value="G_DYNAMIN_dom"/>
</dbReference>
<dbReference type="InterPro" id="IPR045817">
    <property type="entry name" value="OPA1_C"/>
</dbReference>
<dbReference type="InterPro" id="IPR027417">
    <property type="entry name" value="P-loop_NTPase"/>
</dbReference>
<dbReference type="PANTHER" id="PTHR11566">
    <property type="entry name" value="DYNAMIN"/>
    <property type="match status" value="1"/>
</dbReference>
<dbReference type="PANTHER" id="PTHR11566:SF67">
    <property type="entry name" value="DYNAMIN-LIKE 120 KDA PROTEIN, MITOCHONDRIAL"/>
    <property type="match status" value="1"/>
</dbReference>
<dbReference type="Pfam" id="PF00350">
    <property type="entry name" value="Dynamin_N"/>
    <property type="match status" value="1"/>
</dbReference>
<dbReference type="Pfam" id="PF19434">
    <property type="entry name" value="OPA1_C"/>
    <property type="match status" value="1"/>
</dbReference>
<dbReference type="PRINTS" id="PR00195">
    <property type="entry name" value="DYNAMIN"/>
</dbReference>
<dbReference type="SMART" id="SM00053">
    <property type="entry name" value="DYNc"/>
    <property type="match status" value="1"/>
</dbReference>
<dbReference type="SUPFAM" id="SSF52540">
    <property type="entry name" value="P-loop containing nucleoside triphosphate hydrolases"/>
    <property type="match status" value="1"/>
</dbReference>
<dbReference type="PROSITE" id="PS51718">
    <property type="entry name" value="G_DYNAMIN_2"/>
    <property type="match status" value="1"/>
</dbReference>
<gene>
    <name evidence="2" type="primary">OPA1</name>
</gene>